<protein>
    <recommendedName>
        <fullName evidence="1">Siroheme synthase</fullName>
    </recommendedName>
    <domain>
        <recommendedName>
            <fullName evidence="1">Uroporphyrinogen-III C-methyltransferase</fullName>
            <shortName evidence="1">Urogen III methylase</shortName>
            <ecNumber evidence="1">2.1.1.107</ecNumber>
        </recommendedName>
        <alternativeName>
            <fullName evidence="1">SUMT</fullName>
        </alternativeName>
        <alternativeName>
            <fullName evidence="1">Uroporphyrinogen III methylase</fullName>
            <shortName evidence="1">UROM</shortName>
        </alternativeName>
    </domain>
    <domain>
        <recommendedName>
            <fullName evidence="1">Precorrin-2 dehydrogenase</fullName>
            <ecNumber evidence="1">1.3.1.76</ecNumber>
        </recommendedName>
    </domain>
    <domain>
        <recommendedName>
            <fullName evidence="1">Sirohydrochlorin ferrochelatase</fullName>
            <ecNumber evidence="1">4.99.1.4</ecNumber>
        </recommendedName>
    </domain>
</protein>
<sequence>MNFLPIFLDIHDRNCVVAGGGEVAARKVAMLLRAGAHVTVVAPRLCSELLEQLNEQSREGKLAYRAETFQDEHLADAVLVIAATDDFAVNQRISEAAKRLRIPVNVVDNPGLCSFIMPSIVDRTPVVVAVSSGGASPVLTRLLRARLETMIPMAYGRLAAYAGEFRDRVKHRFSQPAQRRRFWERVLQGPFAEMVFAGKDQAAKAWLERELENETEEPVKGEVYLVGAGPGDPELLTFRAMRLMQQADVVVYDRLVSPEILDMLRRDTPRIYAGKERNRHTMPQESINDLLVRLAKEGKRVLRLKGGDPFIFGRGGEEIETLAGHGIPFEVVPGITAANGAASYAGIPLTHRDYAQSCIFVTGHLKDGSVDLDWPMLARPKQTIVVYMGLLGLTVLCKQLIAHGLPNNTPAAIVQQGTTRKQRVLAATLETLPELTAAAHLVPPTLVIVGEVVNLHRKLAWFQPEGNLPGAE</sequence>
<accession>Q2Y6L7</accession>
<reference key="1">
    <citation type="submission" date="2005-08" db="EMBL/GenBank/DDBJ databases">
        <title>Complete sequence of chromosome 1 of Nitrosospira multiformis ATCC 25196.</title>
        <authorList>
            <person name="Copeland A."/>
            <person name="Lucas S."/>
            <person name="Lapidus A."/>
            <person name="Barry K."/>
            <person name="Detter J.C."/>
            <person name="Glavina T."/>
            <person name="Hammon N."/>
            <person name="Israni S."/>
            <person name="Pitluck S."/>
            <person name="Chain P."/>
            <person name="Malfatti S."/>
            <person name="Shin M."/>
            <person name="Vergez L."/>
            <person name="Schmutz J."/>
            <person name="Larimer F."/>
            <person name="Land M."/>
            <person name="Hauser L."/>
            <person name="Kyrpides N."/>
            <person name="Lykidis A."/>
            <person name="Richardson P."/>
        </authorList>
    </citation>
    <scope>NUCLEOTIDE SEQUENCE [LARGE SCALE GENOMIC DNA]</scope>
    <source>
        <strain>ATCC 25196 / NCIMB 11849 / C 71</strain>
    </source>
</reference>
<proteinExistence type="inferred from homology"/>
<organism>
    <name type="scientific">Nitrosospira multiformis (strain ATCC 25196 / NCIMB 11849 / C 71)</name>
    <dbReference type="NCBI Taxonomy" id="323848"/>
    <lineage>
        <taxon>Bacteria</taxon>
        <taxon>Pseudomonadati</taxon>
        <taxon>Pseudomonadota</taxon>
        <taxon>Betaproteobacteria</taxon>
        <taxon>Nitrosomonadales</taxon>
        <taxon>Nitrosomonadaceae</taxon>
        <taxon>Nitrosospira</taxon>
    </lineage>
</organism>
<feature type="chain" id="PRO_0000330528" description="Siroheme synthase">
    <location>
        <begin position="1"/>
        <end position="472"/>
    </location>
</feature>
<feature type="region of interest" description="Precorrin-2 dehydrogenase /sirohydrochlorin ferrochelatase" evidence="1">
    <location>
        <begin position="1"/>
        <end position="207"/>
    </location>
</feature>
<feature type="region of interest" description="Uroporphyrinogen-III C-methyltransferase" evidence="1">
    <location>
        <begin position="221"/>
        <end position="472"/>
    </location>
</feature>
<feature type="active site" description="Proton acceptor" evidence="1">
    <location>
        <position position="253"/>
    </location>
</feature>
<feature type="active site" description="Proton donor" evidence="1">
    <location>
        <position position="275"/>
    </location>
</feature>
<feature type="binding site" evidence="1">
    <location>
        <begin position="22"/>
        <end position="23"/>
    </location>
    <ligand>
        <name>NAD(+)</name>
        <dbReference type="ChEBI" id="CHEBI:57540"/>
    </ligand>
</feature>
<feature type="binding site" evidence="1">
    <location>
        <begin position="43"/>
        <end position="44"/>
    </location>
    <ligand>
        <name>NAD(+)</name>
        <dbReference type="ChEBI" id="CHEBI:57540"/>
    </ligand>
</feature>
<feature type="binding site" evidence="1">
    <location>
        <position position="230"/>
    </location>
    <ligand>
        <name>S-adenosyl-L-methionine</name>
        <dbReference type="ChEBI" id="CHEBI:59789"/>
    </ligand>
</feature>
<feature type="binding site" evidence="1">
    <location>
        <begin position="306"/>
        <end position="308"/>
    </location>
    <ligand>
        <name>S-adenosyl-L-methionine</name>
        <dbReference type="ChEBI" id="CHEBI:59789"/>
    </ligand>
</feature>
<feature type="binding site" evidence="1">
    <location>
        <position position="311"/>
    </location>
    <ligand>
        <name>S-adenosyl-L-methionine</name>
        <dbReference type="ChEBI" id="CHEBI:59789"/>
    </ligand>
</feature>
<feature type="binding site" evidence="1">
    <location>
        <begin position="336"/>
        <end position="337"/>
    </location>
    <ligand>
        <name>S-adenosyl-L-methionine</name>
        <dbReference type="ChEBI" id="CHEBI:59789"/>
    </ligand>
</feature>
<feature type="binding site" evidence="1">
    <location>
        <position position="388"/>
    </location>
    <ligand>
        <name>S-adenosyl-L-methionine</name>
        <dbReference type="ChEBI" id="CHEBI:59789"/>
    </ligand>
</feature>
<feature type="binding site" evidence="1">
    <location>
        <position position="417"/>
    </location>
    <ligand>
        <name>S-adenosyl-L-methionine</name>
        <dbReference type="ChEBI" id="CHEBI:59789"/>
    </ligand>
</feature>
<feature type="modified residue" description="Phosphoserine" evidence="1">
    <location>
        <position position="132"/>
    </location>
</feature>
<comment type="function">
    <text evidence="1">Multifunctional enzyme that catalyzes the SAM-dependent methylations of uroporphyrinogen III at position C-2 and C-7 to form precorrin-2 via precorrin-1. Then it catalyzes the NAD-dependent ring dehydrogenation of precorrin-2 to yield sirohydrochlorin. Finally, it catalyzes the ferrochelation of sirohydrochlorin to yield siroheme.</text>
</comment>
<comment type="catalytic activity">
    <reaction evidence="1">
        <text>uroporphyrinogen III + 2 S-adenosyl-L-methionine = precorrin-2 + 2 S-adenosyl-L-homocysteine + H(+)</text>
        <dbReference type="Rhea" id="RHEA:32459"/>
        <dbReference type="ChEBI" id="CHEBI:15378"/>
        <dbReference type="ChEBI" id="CHEBI:57308"/>
        <dbReference type="ChEBI" id="CHEBI:57856"/>
        <dbReference type="ChEBI" id="CHEBI:58827"/>
        <dbReference type="ChEBI" id="CHEBI:59789"/>
        <dbReference type="EC" id="2.1.1.107"/>
    </reaction>
</comment>
<comment type="catalytic activity">
    <reaction evidence="1">
        <text>precorrin-2 + NAD(+) = sirohydrochlorin + NADH + 2 H(+)</text>
        <dbReference type="Rhea" id="RHEA:15613"/>
        <dbReference type="ChEBI" id="CHEBI:15378"/>
        <dbReference type="ChEBI" id="CHEBI:57540"/>
        <dbReference type="ChEBI" id="CHEBI:57945"/>
        <dbReference type="ChEBI" id="CHEBI:58351"/>
        <dbReference type="ChEBI" id="CHEBI:58827"/>
        <dbReference type="EC" id="1.3.1.76"/>
    </reaction>
</comment>
<comment type="catalytic activity">
    <reaction evidence="1">
        <text>siroheme + 2 H(+) = sirohydrochlorin + Fe(2+)</text>
        <dbReference type="Rhea" id="RHEA:24360"/>
        <dbReference type="ChEBI" id="CHEBI:15378"/>
        <dbReference type="ChEBI" id="CHEBI:29033"/>
        <dbReference type="ChEBI" id="CHEBI:58351"/>
        <dbReference type="ChEBI" id="CHEBI:60052"/>
        <dbReference type="EC" id="4.99.1.4"/>
    </reaction>
</comment>
<comment type="pathway">
    <text evidence="1">Cofactor biosynthesis; adenosylcobalamin biosynthesis; precorrin-2 from uroporphyrinogen III: step 1/1.</text>
</comment>
<comment type="pathway">
    <text evidence="1">Cofactor biosynthesis; adenosylcobalamin biosynthesis; sirohydrochlorin from precorrin-2: step 1/1.</text>
</comment>
<comment type="pathway">
    <text evidence="1">Porphyrin-containing compound metabolism; siroheme biosynthesis; precorrin-2 from uroporphyrinogen III: step 1/1.</text>
</comment>
<comment type="pathway">
    <text evidence="1">Porphyrin-containing compound metabolism; siroheme biosynthesis; siroheme from sirohydrochlorin: step 1/1.</text>
</comment>
<comment type="pathway">
    <text evidence="1">Porphyrin-containing compound metabolism; siroheme biosynthesis; sirohydrochlorin from precorrin-2: step 1/1.</text>
</comment>
<comment type="similarity">
    <text evidence="1">In the N-terminal section; belongs to the precorrin-2 dehydrogenase / sirohydrochlorin ferrochelatase family.</text>
</comment>
<comment type="similarity">
    <text evidence="1">In the C-terminal section; belongs to the precorrin methyltransferase family.</text>
</comment>
<comment type="sequence caution" evidence="2">
    <conflict type="erroneous initiation">
        <sequence resource="EMBL-CDS" id="ABB75604"/>
    </conflict>
    <text>Extended N-terminus.</text>
</comment>
<evidence type="ECO:0000255" key="1">
    <source>
        <dbReference type="HAMAP-Rule" id="MF_01646"/>
    </source>
</evidence>
<evidence type="ECO:0000305" key="2"/>
<name>CYSG_NITMU</name>
<dbReference type="EC" id="2.1.1.107" evidence="1"/>
<dbReference type="EC" id="1.3.1.76" evidence="1"/>
<dbReference type="EC" id="4.99.1.4" evidence="1"/>
<dbReference type="EMBL" id="CP000103">
    <property type="protein sequence ID" value="ABB75604.1"/>
    <property type="status" value="ALT_INIT"/>
    <property type="molecule type" value="Genomic_DNA"/>
</dbReference>
<dbReference type="RefSeq" id="WP_041353255.1">
    <property type="nucleotide sequence ID" value="NC_007614.1"/>
</dbReference>
<dbReference type="SMR" id="Q2Y6L7"/>
<dbReference type="STRING" id="323848.Nmul_A2313"/>
<dbReference type="KEGG" id="nmu:Nmul_A2313"/>
<dbReference type="eggNOG" id="COG0007">
    <property type="taxonomic scope" value="Bacteria"/>
</dbReference>
<dbReference type="eggNOG" id="COG1648">
    <property type="taxonomic scope" value="Bacteria"/>
</dbReference>
<dbReference type="HOGENOM" id="CLU_011276_2_0_4"/>
<dbReference type="OrthoDB" id="9815856at2"/>
<dbReference type="UniPathway" id="UPA00148">
    <property type="reaction ID" value="UER00211"/>
</dbReference>
<dbReference type="UniPathway" id="UPA00148">
    <property type="reaction ID" value="UER00222"/>
</dbReference>
<dbReference type="UniPathway" id="UPA00262">
    <property type="reaction ID" value="UER00211"/>
</dbReference>
<dbReference type="UniPathway" id="UPA00262">
    <property type="reaction ID" value="UER00222"/>
</dbReference>
<dbReference type="UniPathway" id="UPA00262">
    <property type="reaction ID" value="UER00376"/>
</dbReference>
<dbReference type="Proteomes" id="UP000002718">
    <property type="component" value="Chromosome"/>
</dbReference>
<dbReference type="GO" id="GO:0051287">
    <property type="term" value="F:NAD binding"/>
    <property type="evidence" value="ECO:0007669"/>
    <property type="project" value="InterPro"/>
</dbReference>
<dbReference type="GO" id="GO:0043115">
    <property type="term" value="F:precorrin-2 dehydrogenase activity"/>
    <property type="evidence" value="ECO:0007669"/>
    <property type="project" value="UniProtKB-UniRule"/>
</dbReference>
<dbReference type="GO" id="GO:0051266">
    <property type="term" value="F:sirohydrochlorin ferrochelatase activity"/>
    <property type="evidence" value="ECO:0007669"/>
    <property type="project" value="UniProtKB-EC"/>
</dbReference>
<dbReference type="GO" id="GO:0004851">
    <property type="term" value="F:uroporphyrin-III C-methyltransferase activity"/>
    <property type="evidence" value="ECO:0007669"/>
    <property type="project" value="UniProtKB-UniRule"/>
</dbReference>
<dbReference type="GO" id="GO:0009236">
    <property type="term" value="P:cobalamin biosynthetic process"/>
    <property type="evidence" value="ECO:0007669"/>
    <property type="project" value="UniProtKB-UniRule"/>
</dbReference>
<dbReference type="GO" id="GO:0032259">
    <property type="term" value="P:methylation"/>
    <property type="evidence" value="ECO:0007669"/>
    <property type="project" value="UniProtKB-KW"/>
</dbReference>
<dbReference type="GO" id="GO:0019354">
    <property type="term" value="P:siroheme biosynthetic process"/>
    <property type="evidence" value="ECO:0007669"/>
    <property type="project" value="UniProtKB-UniRule"/>
</dbReference>
<dbReference type="CDD" id="cd11642">
    <property type="entry name" value="SUMT"/>
    <property type="match status" value="1"/>
</dbReference>
<dbReference type="FunFam" id="3.30.160.110:FF:000001">
    <property type="entry name" value="Siroheme synthase"/>
    <property type="match status" value="1"/>
</dbReference>
<dbReference type="FunFam" id="3.30.950.10:FF:000001">
    <property type="entry name" value="Siroheme synthase"/>
    <property type="match status" value="1"/>
</dbReference>
<dbReference type="FunFam" id="3.40.1010.10:FF:000001">
    <property type="entry name" value="Siroheme synthase"/>
    <property type="match status" value="1"/>
</dbReference>
<dbReference type="Gene3D" id="3.40.1010.10">
    <property type="entry name" value="Cobalt-precorrin-4 Transmethylase, Domain 1"/>
    <property type="match status" value="1"/>
</dbReference>
<dbReference type="Gene3D" id="3.30.950.10">
    <property type="entry name" value="Methyltransferase, Cobalt-precorrin-4 Transmethylase, Domain 2"/>
    <property type="match status" value="1"/>
</dbReference>
<dbReference type="Gene3D" id="3.40.50.720">
    <property type="entry name" value="NAD(P)-binding Rossmann-like Domain"/>
    <property type="match status" value="1"/>
</dbReference>
<dbReference type="Gene3D" id="1.10.8.210">
    <property type="entry name" value="Sirohaem synthase, dimerisation domain"/>
    <property type="match status" value="1"/>
</dbReference>
<dbReference type="Gene3D" id="3.30.160.110">
    <property type="entry name" value="Siroheme synthase, domain 2"/>
    <property type="match status" value="1"/>
</dbReference>
<dbReference type="HAMAP" id="MF_01646">
    <property type="entry name" value="Siroheme_synth"/>
    <property type="match status" value="1"/>
</dbReference>
<dbReference type="InterPro" id="IPR000878">
    <property type="entry name" value="4pyrrol_Mease"/>
</dbReference>
<dbReference type="InterPro" id="IPR035996">
    <property type="entry name" value="4pyrrol_Methylase_sf"/>
</dbReference>
<dbReference type="InterPro" id="IPR014777">
    <property type="entry name" value="4pyrrole_Mease_sub1"/>
</dbReference>
<dbReference type="InterPro" id="IPR014776">
    <property type="entry name" value="4pyrrole_Mease_sub2"/>
</dbReference>
<dbReference type="InterPro" id="IPR006366">
    <property type="entry name" value="CobA/CysG_C"/>
</dbReference>
<dbReference type="InterPro" id="IPR036291">
    <property type="entry name" value="NAD(P)-bd_dom_sf"/>
</dbReference>
<dbReference type="InterPro" id="IPR050161">
    <property type="entry name" value="Siro_Cobalamin_biosynth"/>
</dbReference>
<dbReference type="InterPro" id="IPR037115">
    <property type="entry name" value="Sirohaem_synt_dimer_dom_sf"/>
</dbReference>
<dbReference type="InterPro" id="IPR012409">
    <property type="entry name" value="Sirohaem_synth"/>
</dbReference>
<dbReference type="InterPro" id="IPR028281">
    <property type="entry name" value="Sirohaem_synthase_central"/>
</dbReference>
<dbReference type="InterPro" id="IPR019478">
    <property type="entry name" value="Sirohaem_synthase_dimer_dom"/>
</dbReference>
<dbReference type="InterPro" id="IPR006367">
    <property type="entry name" value="Sirohaem_synthase_N"/>
</dbReference>
<dbReference type="InterPro" id="IPR003043">
    <property type="entry name" value="Uropor_MeTrfase_CS"/>
</dbReference>
<dbReference type="NCBIfam" id="TIGR01469">
    <property type="entry name" value="cobA_cysG_Cterm"/>
    <property type="match status" value="1"/>
</dbReference>
<dbReference type="NCBIfam" id="TIGR01470">
    <property type="entry name" value="cysG_Nterm"/>
    <property type="match status" value="1"/>
</dbReference>
<dbReference type="NCBIfam" id="NF004790">
    <property type="entry name" value="PRK06136.1"/>
    <property type="match status" value="1"/>
</dbReference>
<dbReference type="NCBIfam" id="NF007922">
    <property type="entry name" value="PRK10637.1"/>
    <property type="match status" value="1"/>
</dbReference>
<dbReference type="PANTHER" id="PTHR45790:SF1">
    <property type="entry name" value="SIROHEME SYNTHASE"/>
    <property type="match status" value="1"/>
</dbReference>
<dbReference type="PANTHER" id="PTHR45790">
    <property type="entry name" value="SIROHEME SYNTHASE-RELATED"/>
    <property type="match status" value="1"/>
</dbReference>
<dbReference type="Pfam" id="PF10414">
    <property type="entry name" value="CysG_dimeriser"/>
    <property type="match status" value="1"/>
</dbReference>
<dbReference type="Pfam" id="PF13241">
    <property type="entry name" value="NAD_binding_7"/>
    <property type="match status" value="1"/>
</dbReference>
<dbReference type="Pfam" id="PF14824">
    <property type="entry name" value="Sirohm_synth_M"/>
    <property type="match status" value="1"/>
</dbReference>
<dbReference type="Pfam" id="PF00590">
    <property type="entry name" value="TP_methylase"/>
    <property type="match status" value="1"/>
</dbReference>
<dbReference type="PIRSF" id="PIRSF036426">
    <property type="entry name" value="Sirohaem_synth"/>
    <property type="match status" value="1"/>
</dbReference>
<dbReference type="SUPFAM" id="SSF51735">
    <property type="entry name" value="NAD(P)-binding Rossmann-fold domains"/>
    <property type="match status" value="1"/>
</dbReference>
<dbReference type="SUPFAM" id="SSF75615">
    <property type="entry name" value="Siroheme synthase middle domains-like"/>
    <property type="match status" value="1"/>
</dbReference>
<dbReference type="SUPFAM" id="SSF53790">
    <property type="entry name" value="Tetrapyrrole methylase"/>
    <property type="match status" value="1"/>
</dbReference>
<dbReference type="PROSITE" id="PS00840">
    <property type="entry name" value="SUMT_2"/>
    <property type="match status" value="1"/>
</dbReference>
<keyword id="KW-0169">Cobalamin biosynthesis</keyword>
<keyword id="KW-0456">Lyase</keyword>
<keyword id="KW-0489">Methyltransferase</keyword>
<keyword id="KW-0511">Multifunctional enzyme</keyword>
<keyword id="KW-0520">NAD</keyword>
<keyword id="KW-0560">Oxidoreductase</keyword>
<keyword id="KW-0597">Phosphoprotein</keyword>
<keyword id="KW-0627">Porphyrin biosynthesis</keyword>
<keyword id="KW-1185">Reference proteome</keyword>
<keyword id="KW-0949">S-adenosyl-L-methionine</keyword>
<keyword id="KW-0808">Transferase</keyword>
<gene>
    <name evidence="1" type="primary">cysG</name>
    <name type="ordered locus">Nmul_A2313</name>
</gene>